<evidence type="ECO:0000250" key="1"/>
<evidence type="ECO:0000305" key="2"/>
<protein>
    <recommendedName>
        <fullName>Phosphoglycolate phosphatase 2</fullName>
        <shortName>PGP 2</shortName>
        <shortName>PGPase 2</shortName>
        <ecNumber>3.1.3.18</ecNumber>
    </recommendedName>
</protein>
<gene>
    <name type="ordered locus">SSO2157</name>
    <name type="ORF">C01033</name>
</gene>
<comment type="function">
    <text evidence="1">Catalyzes the dephosphorylation of 2-phosphoglycolate.</text>
</comment>
<comment type="catalytic activity">
    <reaction>
        <text>2-phosphoglycolate + H2O = glycolate + phosphate</text>
        <dbReference type="Rhea" id="RHEA:14369"/>
        <dbReference type="ChEBI" id="CHEBI:15377"/>
        <dbReference type="ChEBI" id="CHEBI:29805"/>
        <dbReference type="ChEBI" id="CHEBI:43474"/>
        <dbReference type="ChEBI" id="CHEBI:58033"/>
        <dbReference type="EC" id="3.1.3.18"/>
    </reaction>
</comment>
<comment type="cofactor">
    <cofactor evidence="1">
        <name>Mg(2+)</name>
        <dbReference type="ChEBI" id="CHEBI:18420"/>
    </cofactor>
</comment>
<comment type="similarity">
    <text evidence="2">Belongs to the archaeal SPP-like hydrolase family.</text>
</comment>
<sequence length="233" mass="26215">MDIGSNEILVASDYDRTLASEENNFVISPIVSQKVNEFSKKYKFVVVTGREKKFIDKLAVGLKPTAWILENGSLILFNDREFVLCEKSWFERDRKKIIEILDNLKVRYSIGRIILYVDGYGSKLDMLSEIEKYGRIEVNRNDAMILPKGVDKGVGVLKFKELTGFKGKIIALGDSENDYALFRVADIKVAVANAIPQIKEIADIVTENPNGLGVVEILDKILSGNFGKEVDIY</sequence>
<name>PGP2_SACS2</name>
<dbReference type="EC" id="3.1.3.18"/>
<dbReference type="EMBL" id="Y08256">
    <property type="protein sequence ID" value="CAA69435.1"/>
    <property type="molecule type" value="Genomic_DNA"/>
</dbReference>
<dbReference type="EMBL" id="AE006641">
    <property type="protein sequence ID" value="AAK42333.1"/>
    <property type="molecule type" value="Genomic_DNA"/>
</dbReference>
<dbReference type="PIR" id="S74064">
    <property type="entry name" value="S74064"/>
</dbReference>
<dbReference type="RefSeq" id="WP_009992158.1">
    <property type="nucleotide sequence ID" value="NC_002754.1"/>
</dbReference>
<dbReference type="SMR" id="P95931"/>
<dbReference type="STRING" id="273057.SSO2157"/>
<dbReference type="PaxDb" id="273057-SSO2157"/>
<dbReference type="DNASU" id="1453660"/>
<dbReference type="EnsemblBacteria" id="AAK42333">
    <property type="protein sequence ID" value="AAK42333"/>
    <property type="gene ID" value="SSO2157"/>
</dbReference>
<dbReference type="KEGG" id="sso:SSO2157"/>
<dbReference type="PATRIC" id="fig|273057.12.peg.2250"/>
<dbReference type="eggNOG" id="arCOG01213">
    <property type="taxonomic scope" value="Archaea"/>
</dbReference>
<dbReference type="HOGENOM" id="CLU_1237940_0_0_2"/>
<dbReference type="InParanoid" id="P95931"/>
<dbReference type="PhylomeDB" id="P95931"/>
<dbReference type="Proteomes" id="UP000001974">
    <property type="component" value="Chromosome"/>
</dbReference>
<dbReference type="GO" id="GO:0005829">
    <property type="term" value="C:cytosol"/>
    <property type="evidence" value="ECO:0000318"/>
    <property type="project" value="GO_Central"/>
</dbReference>
<dbReference type="GO" id="GO:0000287">
    <property type="term" value="F:magnesium ion binding"/>
    <property type="evidence" value="ECO:0000318"/>
    <property type="project" value="GO_Central"/>
</dbReference>
<dbReference type="GO" id="GO:0016791">
    <property type="term" value="F:phosphatase activity"/>
    <property type="evidence" value="ECO:0000318"/>
    <property type="project" value="GO_Central"/>
</dbReference>
<dbReference type="GO" id="GO:0008967">
    <property type="term" value="F:phosphoglycolate phosphatase activity"/>
    <property type="evidence" value="ECO:0007669"/>
    <property type="project" value="UniProtKB-UniRule"/>
</dbReference>
<dbReference type="Gene3D" id="3.90.1070.10">
    <property type="match status" value="1"/>
</dbReference>
<dbReference type="Gene3D" id="3.40.50.1000">
    <property type="entry name" value="HAD superfamily/HAD-like"/>
    <property type="match status" value="1"/>
</dbReference>
<dbReference type="HAMAP" id="MF_01419">
    <property type="entry name" value="GPH_hydrolase_arch"/>
    <property type="match status" value="1"/>
</dbReference>
<dbReference type="InterPro" id="IPR036412">
    <property type="entry name" value="HAD-like_sf"/>
</dbReference>
<dbReference type="InterPro" id="IPR006379">
    <property type="entry name" value="HAD-SF_hydro_IIB"/>
</dbReference>
<dbReference type="InterPro" id="IPR023214">
    <property type="entry name" value="HAD_sf"/>
</dbReference>
<dbReference type="InterPro" id="IPR006382">
    <property type="entry name" value="PGPase"/>
</dbReference>
<dbReference type="NCBIfam" id="TIGR01484">
    <property type="entry name" value="HAD-SF-IIB"/>
    <property type="match status" value="1"/>
</dbReference>
<dbReference type="NCBIfam" id="TIGR01487">
    <property type="entry name" value="Pglycolate_arch"/>
    <property type="match status" value="1"/>
</dbReference>
<dbReference type="NCBIfam" id="TIGR01482">
    <property type="entry name" value="SPP-subfamily"/>
    <property type="match status" value="1"/>
</dbReference>
<dbReference type="PANTHER" id="PTHR10000:SF8">
    <property type="entry name" value="HAD SUPERFAMILY HYDROLASE-LIKE, TYPE 3"/>
    <property type="match status" value="1"/>
</dbReference>
<dbReference type="PANTHER" id="PTHR10000">
    <property type="entry name" value="PHOSPHOSERINE PHOSPHATASE"/>
    <property type="match status" value="1"/>
</dbReference>
<dbReference type="Pfam" id="PF08282">
    <property type="entry name" value="Hydrolase_3"/>
    <property type="match status" value="2"/>
</dbReference>
<dbReference type="SUPFAM" id="SSF56784">
    <property type="entry name" value="HAD-like"/>
    <property type="match status" value="1"/>
</dbReference>
<organism>
    <name type="scientific">Saccharolobus solfataricus (strain ATCC 35092 / DSM 1617 / JCM 11322 / P2)</name>
    <name type="common">Sulfolobus solfataricus</name>
    <dbReference type="NCBI Taxonomy" id="273057"/>
    <lineage>
        <taxon>Archaea</taxon>
        <taxon>Thermoproteota</taxon>
        <taxon>Thermoprotei</taxon>
        <taxon>Sulfolobales</taxon>
        <taxon>Sulfolobaceae</taxon>
        <taxon>Saccharolobus</taxon>
    </lineage>
</organism>
<proteinExistence type="inferred from homology"/>
<reference key="1">
    <citation type="journal article" date="2001" name="Proc. Natl. Acad. Sci. U.S.A.">
        <title>The complete genome of the crenarchaeon Sulfolobus solfataricus P2.</title>
        <authorList>
            <person name="She Q."/>
            <person name="Singh R.K."/>
            <person name="Confalonieri F."/>
            <person name="Zivanovic Y."/>
            <person name="Allard G."/>
            <person name="Awayez M.J."/>
            <person name="Chan-Weiher C.C.-Y."/>
            <person name="Clausen I.G."/>
            <person name="Curtis B.A."/>
            <person name="De Moors A."/>
            <person name="Erauso G."/>
            <person name="Fletcher C."/>
            <person name="Gordon P.M.K."/>
            <person name="Heikamp-de Jong I."/>
            <person name="Jeffries A.C."/>
            <person name="Kozera C.J."/>
            <person name="Medina N."/>
            <person name="Peng X."/>
            <person name="Thi-Ngoc H.P."/>
            <person name="Redder P."/>
            <person name="Schenk M.E."/>
            <person name="Theriault C."/>
            <person name="Tolstrup N."/>
            <person name="Charlebois R.L."/>
            <person name="Doolittle W.F."/>
            <person name="Duguet M."/>
            <person name="Gaasterland T."/>
            <person name="Garrett R.A."/>
            <person name="Ragan M.A."/>
            <person name="Sensen C.W."/>
            <person name="Van der Oost J."/>
        </authorList>
    </citation>
    <scope>NUCLEOTIDE SEQUENCE [LARGE SCALE GENOMIC DNA]</scope>
    <source>
        <strain>ATCC 35092 / DSM 1617 / JCM 11322 / P2</strain>
    </source>
</reference>
<feature type="chain" id="PRO_0000146729" description="Phosphoglycolate phosphatase 2">
    <location>
        <begin position="1"/>
        <end position="233"/>
    </location>
</feature>
<feature type="active site" description="Nucleophile" evidence="1">
    <location>
        <position position="13"/>
    </location>
</feature>
<feature type="binding site" evidence="1">
    <location>
        <position position="13"/>
    </location>
    <ligand>
        <name>Mg(2+)</name>
        <dbReference type="ChEBI" id="CHEBI:18420"/>
    </ligand>
</feature>
<feature type="binding site" evidence="1">
    <location>
        <position position="15"/>
    </location>
    <ligand>
        <name>Mg(2+)</name>
        <dbReference type="ChEBI" id="CHEBI:18420"/>
    </ligand>
</feature>
<feature type="binding site" evidence="1">
    <location>
        <position position="152"/>
    </location>
    <ligand>
        <name>substrate</name>
    </ligand>
</feature>
<feature type="binding site" evidence="1">
    <location>
        <position position="174"/>
    </location>
    <ligand>
        <name>Mg(2+)</name>
        <dbReference type="ChEBI" id="CHEBI:18420"/>
    </ligand>
</feature>
<feature type="binding site" evidence="1">
    <location>
        <position position="178"/>
    </location>
    <ligand>
        <name>Mg(2+)</name>
        <dbReference type="ChEBI" id="CHEBI:18420"/>
    </ligand>
</feature>
<accession>P95931</accession>
<keyword id="KW-0119">Carbohydrate metabolism</keyword>
<keyword id="KW-0378">Hydrolase</keyword>
<keyword id="KW-0460">Magnesium</keyword>
<keyword id="KW-0479">Metal-binding</keyword>
<keyword id="KW-1185">Reference proteome</keyword>